<reference key="1">
    <citation type="journal article" date="2003" name="Proc. Natl. Acad. Sci. U.S.A.">
        <title>The complete genome sequence of Chromobacterium violaceum reveals remarkable and exploitable bacterial adaptability.</title>
        <authorList>
            <person name="Vasconcelos A.T.R."/>
            <person name="de Almeida D.F."/>
            <person name="Hungria M."/>
            <person name="Guimaraes C.T."/>
            <person name="Antonio R.V."/>
            <person name="Almeida F.C."/>
            <person name="de Almeida L.G.P."/>
            <person name="de Almeida R."/>
            <person name="Alves-Gomes J.A."/>
            <person name="Andrade E.M."/>
            <person name="Araripe J."/>
            <person name="de Araujo M.F.F."/>
            <person name="Astolfi-Filho S."/>
            <person name="Azevedo V."/>
            <person name="Baptista A.J."/>
            <person name="Bataus L.A.M."/>
            <person name="Batista J.S."/>
            <person name="Belo A."/>
            <person name="van den Berg C."/>
            <person name="Bogo M."/>
            <person name="Bonatto S."/>
            <person name="Bordignon J."/>
            <person name="Brigido M.M."/>
            <person name="Brito C.A."/>
            <person name="Brocchi M."/>
            <person name="Burity H.A."/>
            <person name="Camargo A.A."/>
            <person name="Cardoso D.D.P."/>
            <person name="Carneiro N.P."/>
            <person name="Carraro D.M."/>
            <person name="Carvalho C.M.B."/>
            <person name="Cascardo J.C.M."/>
            <person name="Cavada B.S."/>
            <person name="Chueire L.M.O."/>
            <person name="Creczynski-Pasa T.B."/>
            <person name="Cunha-Junior N.C."/>
            <person name="Fagundes N."/>
            <person name="Falcao C.L."/>
            <person name="Fantinatti F."/>
            <person name="Farias I.P."/>
            <person name="Felipe M.S.S."/>
            <person name="Ferrari L.P."/>
            <person name="Ferro J.A."/>
            <person name="Ferro M.I.T."/>
            <person name="Franco G.R."/>
            <person name="Freitas N.S.A."/>
            <person name="Furlan L.R."/>
            <person name="Gazzinelli R.T."/>
            <person name="Gomes E.A."/>
            <person name="Goncalves P.R."/>
            <person name="Grangeiro T.B."/>
            <person name="Grattapaglia D."/>
            <person name="Grisard E.C."/>
            <person name="Hanna E.S."/>
            <person name="Jardim S.N."/>
            <person name="Laurino J."/>
            <person name="Leoi L.C.T."/>
            <person name="Lima L.F.A."/>
            <person name="Loureiro M.F."/>
            <person name="Lyra M.C.C.P."/>
            <person name="Madeira H.M.F."/>
            <person name="Manfio G.P."/>
            <person name="Maranhao A.Q."/>
            <person name="Martins W.S."/>
            <person name="di Mauro S.M.Z."/>
            <person name="de Medeiros S.R.B."/>
            <person name="Meissner R.V."/>
            <person name="Moreira M.A.M."/>
            <person name="Nascimento F.F."/>
            <person name="Nicolas M.F."/>
            <person name="Oliveira J.G."/>
            <person name="Oliveira S.C."/>
            <person name="Paixao R.F.C."/>
            <person name="Parente J.A."/>
            <person name="Pedrosa F.O."/>
            <person name="Pena S.D.J."/>
            <person name="Pereira J.O."/>
            <person name="Pereira M."/>
            <person name="Pinto L.S.R.C."/>
            <person name="Pinto L.S."/>
            <person name="Porto J.I.R."/>
            <person name="Potrich D.P."/>
            <person name="Ramalho-Neto C.E."/>
            <person name="Reis A.M.M."/>
            <person name="Rigo L.U."/>
            <person name="Rondinelli E."/>
            <person name="Santos E.B.P."/>
            <person name="Santos F.R."/>
            <person name="Schneider M.P.C."/>
            <person name="Seuanez H.N."/>
            <person name="Silva A.M.R."/>
            <person name="da Silva A.L.C."/>
            <person name="Silva D.W."/>
            <person name="Silva R."/>
            <person name="Simoes I.C."/>
            <person name="Simon D."/>
            <person name="Soares C.M.A."/>
            <person name="Soares R.B.A."/>
            <person name="Souza E.M."/>
            <person name="Souza K.R.L."/>
            <person name="Souza R.C."/>
            <person name="Steffens M.B.R."/>
            <person name="Steindel M."/>
            <person name="Teixeira S.R."/>
            <person name="Urmenyi T."/>
            <person name="Vettore A."/>
            <person name="Wassem R."/>
            <person name="Zaha A."/>
            <person name="Simpson A.J.G."/>
        </authorList>
    </citation>
    <scope>NUCLEOTIDE SEQUENCE [LARGE SCALE GENOMIC DNA]</scope>
    <source>
        <strain>ATCC 12472 / DSM 30191 / JCM 1249 / CCUG 213 / NBRC 12614 / NCIMB 9131 / NCTC 9757 / MK</strain>
    </source>
</reference>
<keyword id="KW-0963">Cytoplasm</keyword>
<keyword id="KW-0227">DNA damage</keyword>
<keyword id="KW-0228">DNA excision</keyword>
<keyword id="KW-0234">DNA repair</keyword>
<keyword id="KW-0267">Excision nuclease</keyword>
<keyword id="KW-1185">Reference proteome</keyword>
<keyword id="KW-0742">SOS response</keyword>
<proteinExistence type="inferred from homology"/>
<organism>
    <name type="scientific">Chromobacterium violaceum (strain ATCC 12472 / DSM 30191 / JCM 1249 / CCUG 213 / NBRC 12614 / NCIMB 9131 / NCTC 9757 / MK)</name>
    <dbReference type="NCBI Taxonomy" id="243365"/>
    <lineage>
        <taxon>Bacteria</taxon>
        <taxon>Pseudomonadati</taxon>
        <taxon>Pseudomonadota</taxon>
        <taxon>Betaproteobacteria</taxon>
        <taxon>Neisseriales</taxon>
        <taxon>Chromobacteriaceae</taxon>
        <taxon>Chromobacterium</taxon>
    </lineage>
</organism>
<gene>
    <name evidence="1" type="primary">uvrC</name>
    <name type="ordered locus">CV_1305</name>
</gene>
<comment type="function">
    <text evidence="1">The UvrABC repair system catalyzes the recognition and processing of DNA lesions. UvrC both incises the 5' and 3' sides of the lesion. The N-terminal half is responsible for the 3' incision and the C-terminal half is responsible for the 5' incision.</text>
</comment>
<comment type="subunit">
    <text evidence="1">Interacts with UvrB in an incision complex.</text>
</comment>
<comment type="subcellular location">
    <subcellularLocation>
        <location evidence="1">Cytoplasm</location>
    </subcellularLocation>
</comment>
<comment type="similarity">
    <text evidence="1">Belongs to the UvrC family.</text>
</comment>
<dbReference type="EMBL" id="AE016825">
    <property type="protein sequence ID" value="AAQ58980.1"/>
    <property type="molecule type" value="Genomic_DNA"/>
</dbReference>
<dbReference type="RefSeq" id="WP_011134859.1">
    <property type="nucleotide sequence ID" value="NC_005085.1"/>
</dbReference>
<dbReference type="SMR" id="Q7NYG9"/>
<dbReference type="STRING" id="243365.CV_1305"/>
<dbReference type="KEGG" id="cvi:CV_1305"/>
<dbReference type="eggNOG" id="COG0322">
    <property type="taxonomic scope" value="Bacteria"/>
</dbReference>
<dbReference type="HOGENOM" id="CLU_014841_3_0_4"/>
<dbReference type="OrthoDB" id="9804933at2"/>
<dbReference type="Proteomes" id="UP000001424">
    <property type="component" value="Chromosome"/>
</dbReference>
<dbReference type="GO" id="GO:0005737">
    <property type="term" value="C:cytoplasm"/>
    <property type="evidence" value="ECO:0007669"/>
    <property type="project" value="UniProtKB-SubCell"/>
</dbReference>
<dbReference type="GO" id="GO:0009380">
    <property type="term" value="C:excinuclease repair complex"/>
    <property type="evidence" value="ECO:0007669"/>
    <property type="project" value="InterPro"/>
</dbReference>
<dbReference type="GO" id="GO:0003677">
    <property type="term" value="F:DNA binding"/>
    <property type="evidence" value="ECO:0007669"/>
    <property type="project" value="UniProtKB-UniRule"/>
</dbReference>
<dbReference type="GO" id="GO:0009381">
    <property type="term" value="F:excinuclease ABC activity"/>
    <property type="evidence" value="ECO:0007669"/>
    <property type="project" value="UniProtKB-UniRule"/>
</dbReference>
<dbReference type="GO" id="GO:0006289">
    <property type="term" value="P:nucleotide-excision repair"/>
    <property type="evidence" value="ECO:0007669"/>
    <property type="project" value="UniProtKB-UniRule"/>
</dbReference>
<dbReference type="GO" id="GO:0009432">
    <property type="term" value="P:SOS response"/>
    <property type="evidence" value="ECO:0007669"/>
    <property type="project" value="UniProtKB-UniRule"/>
</dbReference>
<dbReference type="CDD" id="cd10434">
    <property type="entry name" value="GIY-YIG_UvrC_Cho"/>
    <property type="match status" value="1"/>
</dbReference>
<dbReference type="FunFam" id="1.10.150.20:FF:000005">
    <property type="entry name" value="UvrABC system protein C"/>
    <property type="match status" value="1"/>
</dbReference>
<dbReference type="FunFam" id="3.30.420.340:FF:000001">
    <property type="entry name" value="UvrABC system protein C"/>
    <property type="match status" value="1"/>
</dbReference>
<dbReference type="FunFam" id="3.40.1440.10:FF:000001">
    <property type="entry name" value="UvrABC system protein C"/>
    <property type="match status" value="1"/>
</dbReference>
<dbReference type="Gene3D" id="1.10.150.20">
    <property type="entry name" value="5' to 3' exonuclease, C-terminal subdomain"/>
    <property type="match status" value="1"/>
</dbReference>
<dbReference type="Gene3D" id="3.40.1440.10">
    <property type="entry name" value="GIY-YIG endonuclease"/>
    <property type="match status" value="1"/>
</dbReference>
<dbReference type="Gene3D" id="4.10.860.10">
    <property type="entry name" value="UVR domain"/>
    <property type="match status" value="1"/>
</dbReference>
<dbReference type="Gene3D" id="3.30.420.340">
    <property type="entry name" value="UvrC, RNAse H endonuclease domain"/>
    <property type="match status" value="1"/>
</dbReference>
<dbReference type="HAMAP" id="MF_00203">
    <property type="entry name" value="UvrC"/>
    <property type="match status" value="1"/>
</dbReference>
<dbReference type="InterPro" id="IPR000305">
    <property type="entry name" value="GIY-YIG_endonuc"/>
</dbReference>
<dbReference type="InterPro" id="IPR035901">
    <property type="entry name" value="GIY-YIG_endonuc_sf"/>
</dbReference>
<dbReference type="InterPro" id="IPR047296">
    <property type="entry name" value="GIY-YIG_UvrC_Cho"/>
</dbReference>
<dbReference type="InterPro" id="IPR003583">
    <property type="entry name" value="Hlx-hairpin-Hlx_DNA-bd_motif"/>
</dbReference>
<dbReference type="InterPro" id="IPR010994">
    <property type="entry name" value="RuvA_2-like"/>
</dbReference>
<dbReference type="InterPro" id="IPR001943">
    <property type="entry name" value="UVR_dom"/>
</dbReference>
<dbReference type="InterPro" id="IPR036876">
    <property type="entry name" value="UVR_dom_sf"/>
</dbReference>
<dbReference type="InterPro" id="IPR050066">
    <property type="entry name" value="UvrABC_protein_C"/>
</dbReference>
<dbReference type="InterPro" id="IPR004791">
    <property type="entry name" value="UvrC"/>
</dbReference>
<dbReference type="InterPro" id="IPR001162">
    <property type="entry name" value="UvrC_RNase_H_dom"/>
</dbReference>
<dbReference type="InterPro" id="IPR038476">
    <property type="entry name" value="UvrC_RNase_H_dom_sf"/>
</dbReference>
<dbReference type="NCBIfam" id="NF001824">
    <property type="entry name" value="PRK00558.1-5"/>
    <property type="match status" value="1"/>
</dbReference>
<dbReference type="NCBIfam" id="TIGR00194">
    <property type="entry name" value="uvrC"/>
    <property type="match status" value="1"/>
</dbReference>
<dbReference type="PANTHER" id="PTHR30562:SF1">
    <property type="entry name" value="UVRABC SYSTEM PROTEIN C"/>
    <property type="match status" value="1"/>
</dbReference>
<dbReference type="PANTHER" id="PTHR30562">
    <property type="entry name" value="UVRC/OXIDOREDUCTASE"/>
    <property type="match status" value="1"/>
</dbReference>
<dbReference type="Pfam" id="PF01541">
    <property type="entry name" value="GIY-YIG"/>
    <property type="match status" value="1"/>
</dbReference>
<dbReference type="Pfam" id="PF14520">
    <property type="entry name" value="HHH_5"/>
    <property type="match status" value="1"/>
</dbReference>
<dbReference type="Pfam" id="PF02151">
    <property type="entry name" value="UVR"/>
    <property type="match status" value="1"/>
</dbReference>
<dbReference type="Pfam" id="PF22920">
    <property type="entry name" value="UvrC_RNaseH"/>
    <property type="match status" value="1"/>
</dbReference>
<dbReference type="Pfam" id="PF08459">
    <property type="entry name" value="UvrC_RNaseH_dom"/>
    <property type="match status" value="1"/>
</dbReference>
<dbReference type="SMART" id="SM00465">
    <property type="entry name" value="GIYc"/>
    <property type="match status" value="1"/>
</dbReference>
<dbReference type="SMART" id="SM00278">
    <property type="entry name" value="HhH1"/>
    <property type="match status" value="2"/>
</dbReference>
<dbReference type="SUPFAM" id="SSF46600">
    <property type="entry name" value="C-terminal UvrC-binding domain of UvrB"/>
    <property type="match status" value="1"/>
</dbReference>
<dbReference type="SUPFAM" id="SSF82771">
    <property type="entry name" value="GIY-YIG endonuclease"/>
    <property type="match status" value="1"/>
</dbReference>
<dbReference type="SUPFAM" id="SSF47781">
    <property type="entry name" value="RuvA domain 2-like"/>
    <property type="match status" value="1"/>
</dbReference>
<dbReference type="PROSITE" id="PS50164">
    <property type="entry name" value="GIY_YIG"/>
    <property type="match status" value="1"/>
</dbReference>
<dbReference type="PROSITE" id="PS50151">
    <property type="entry name" value="UVR"/>
    <property type="match status" value="1"/>
</dbReference>
<dbReference type="PROSITE" id="PS50165">
    <property type="entry name" value="UVRC"/>
    <property type="match status" value="1"/>
</dbReference>
<feature type="chain" id="PRO_0000227415" description="UvrABC system protein C">
    <location>
        <begin position="1"/>
        <end position="601"/>
    </location>
</feature>
<feature type="domain" description="GIY-YIG" evidence="1">
    <location>
        <begin position="17"/>
        <end position="95"/>
    </location>
</feature>
<feature type="domain" description="UVR" evidence="1">
    <location>
        <begin position="204"/>
        <end position="239"/>
    </location>
</feature>
<protein>
    <recommendedName>
        <fullName evidence="1">UvrABC system protein C</fullName>
        <shortName evidence="1">Protein UvrC</shortName>
    </recommendedName>
    <alternativeName>
        <fullName evidence="1">Excinuclease ABC subunit C</fullName>
    </alternativeName>
</protein>
<sequence>MSKPAFDYRNVLQNLPTLPGVYRMLDAAGKVLYVGKAIDLKRRVSSYFQKNDLSPRIQLMVRQIASIETTVTRSEAEALILENNLIKALAPRYNILFRDDKSYPYLMFSGHAFPQMAYYRGEPKKPNQYFGPYPNGYAVRESIQILQKVFRLRTCEDAVFANRSRPCLLYQIKRCSGPCVDHISKEEYAADVASAVAFLNGRQSELINELTRRMTAAAEAMAFEQAAELRDQIQALARVQEKQFVASNQSQQDCDVVAARVRDGVPCVNLVMIRGGRHLGDKSHFPIGGEADTEQEILEAFIGQHYQHAGVPAALVVNGVVDDALQQFLQERAGRKVYIVGNPIGERRVWLEMAEKNAELAILQRLGSKATQAQRLAQLNEVLELEDAGRFECFDISHTMGEATVASCVVYDKGAMQPTEYRRFNITTAAPGDDYAAMREVLSRRYGKLAEGEGRLPDAVFIDGGKGQVGVALEVLGELGLNLPIVGIAKGEERKPGLETLILPYLEKTLQLRQDHPALHLIQTVRDEAHRFAITGHRARRAKARTSSTLEDIPGIGAKRRQQLLTRFGGLRGVATASVDDLAQVEGISRTLAEKIYNALH</sequence>
<accession>Q7NYG9</accession>
<name>UVRC_CHRVO</name>
<evidence type="ECO:0000255" key="1">
    <source>
        <dbReference type="HAMAP-Rule" id="MF_00203"/>
    </source>
</evidence>